<protein>
    <recommendedName>
        <fullName>HTH-type transcriptional regulator SinR</fullName>
    </recommendedName>
</protein>
<comment type="function">
    <text evidence="4 5 6 7">Negative as well as positive regulator of alternate developmental processes that are induced at the end of vegetative growth in response to nutrient depletion. Binds to the alkaline protease (aprE) gene at two sites. Also acts as a repressor of the key sporulation gene spo0A. Negatively regulates transcription of the eps operon, which is responsible for the biosynthesis of an exopolysaccharide involved in biofilm formation; therefore it could govern the transition between a state in which bacteria swim or swarm and a state in which bacteria assemble into multicellular communities. Acts with Hpr as a corepressor of epr expression. Also negatively regulates transcription of the lutABC operon, which is required for lactate utilization. Repressor activity is regulated by SinI.</text>
</comment>
<comment type="subunit">
    <text evidence="3 5 8">Homotetramer in the absence of SinI. Heterodimer with SinI. Interaction with SinI disrupts the SinR tetramer and its repressor activity. Interacts with hpr.</text>
</comment>
<accession>P06533</accession>
<dbReference type="EMBL" id="M14112">
    <property type="protein sequence ID" value="AAA22757.1"/>
    <property type="molecule type" value="Genomic_DNA"/>
</dbReference>
<dbReference type="EMBL" id="D84432">
    <property type="protein sequence ID" value="BAA12542.1"/>
    <property type="molecule type" value="Genomic_DNA"/>
</dbReference>
<dbReference type="EMBL" id="AL009126">
    <property type="protein sequence ID" value="CAB14392.1"/>
    <property type="molecule type" value="Genomic_DNA"/>
</dbReference>
<dbReference type="PIR" id="B25159">
    <property type="entry name" value="B25159"/>
</dbReference>
<dbReference type="RefSeq" id="NP_390341.1">
    <property type="nucleotide sequence ID" value="NC_000964.3"/>
</dbReference>
<dbReference type="RefSeq" id="WP_003226345.1">
    <property type="nucleotide sequence ID" value="NZ_OZ025638.1"/>
</dbReference>
<dbReference type="PDB" id="1B0N">
    <property type="method" value="X-ray"/>
    <property type="resolution" value="1.90 A"/>
    <property type="chains" value="A=1-111"/>
</dbReference>
<dbReference type="PDB" id="2YAL">
    <property type="method" value="X-ray"/>
    <property type="resolution" value="2.27 A"/>
    <property type="chains" value="A/B=75-111"/>
</dbReference>
<dbReference type="PDB" id="3QQ6">
    <property type="method" value="X-ray"/>
    <property type="resolution" value="1.90 A"/>
    <property type="chains" value="A/B=1-69"/>
</dbReference>
<dbReference type="PDB" id="3ZKC">
    <property type="method" value="X-ray"/>
    <property type="resolution" value="3.00 A"/>
    <property type="chains" value="A/B=1-111"/>
</dbReference>
<dbReference type="PDB" id="5TN0">
    <property type="method" value="NMR"/>
    <property type="chains" value="A=1-69"/>
</dbReference>
<dbReference type="PDB" id="5TN2">
    <property type="method" value="NMR"/>
    <property type="chains" value="A/B/C/D=69-111"/>
</dbReference>
<dbReference type="PDBsum" id="1B0N"/>
<dbReference type="PDBsum" id="2YAL"/>
<dbReference type="PDBsum" id="3QQ6"/>
<dbReference type="PDBsum" id="3ZKC"/>
<dbReference type="PDBsum" id="5TN0"/>
<dbReference type="PDBsum" id="5TN2"/>
<dbReference type="BMRB" id="P06533"/>
<dbReference type="SMR" id="P06533"/>
<dbReference type="DIP" id="DIP-6102N"/>
<dbReference type="FunCoup" id="P06533">
    <property type="interactions" value="11"/>
</dbReference>
<dbReference type="IntAct" id="P06533">
    <property type="interactions" value="2"/>
</dbReference>
<dbReference type="MINT" id="P06533"/>
<dbReference type="STRING" id="224308.BSU24610"/>
<dbReference type="PaxDb" id="224308-BSU24610"/>
<dbReference type="EnsemblBacteria" id="CAB14392">
    <property type="protein sequence ID" value="CAB14392"/>
    <property type="gene ID" value="BSU_24610"/>
</dbReference>
<dbReference type="GeneID" id="86872992"/>
<dbReference type="GeneID" id="938544"/>
<dbReference type="KEGG" id="bsu:BSU24610"/>
<dbReference type="PATRIC" id="fig|224308.43.peg.2568"/>
<dbReference type="eggNOG" id="COG1396">
    <property type="taxonomic scope" value="Bacteria"/>
</dbReference>
<dbReference type="InParanoid" id="P06533"/>
<dbReference type="OrthoDB" id="1859224at2"/>
<dbReference type="PhylomeDB" id="P06533"/>
<dbReference type="BioCyc" id="BSUB:BSU24610-MONOMER"/>
<dbReference type="EvolutionaryTrace" id="P06533"/>
<dbReference type="Proteomes" id="UP000001570">
    <property type="component" value="Chromosome"/>
</dbReference>
<dbReference type="GO" id="GO:0003677">
    <property type="term" value="F:DNA binding"/>
    <property type="evidence" value="ECO:0007669"/>
    <property type="project" value="UniProtKB-KW"/>
</dbReference>
<dbReference type="GO" id="GO:0003700">
    <property type="term" value="F:DNA-binding transcription factor activity"/>
    <property type="evidence" value="ECO:0000318"/>
    <property type="project" value="GO_Central"/>
</dbReference>
<dbReference type="GO" id="GO:0046983">
    <property type="term" value="F:protein dimerization activity"/>
    <property type="evidence" value="ECO:0007669"/>
    <property type="project" value="InterPro"/>
</dbReference>
<dbReference type="GO" id="GO:0045892">
    <property type="term" value="P:negative regulation of DNA-templated transcription"/>
    <property type="evidence" value="ECO:0000315"/>
    <property type="project" value="CACAO"/>
</dbReference>
<dbReference type="GO" id="GO:0010629">
    <property type="term" value="P:negative regulation of gene expression"/>
    <property type="evidence" value="ECO:0000315"/>
    <property type="project" value="CACAO"/>
</dbReference>
<dbReference type="GO" id="GO:0006355">
    <property type="term" value="P:regulation of DNA-templated transcription"/>
    <property type="evidence" value="ECO:0000318"/>
    <property type="project" value="GO_Central"/>
</dbReference>
<dbReference type="GO" id="GO:0030435">
    <property type="term" value="P:sporulation resulting in formation of a cellular spore"/>
    <property type="evidence" value="ECO:0007669"/>
    <property type="project" value="UniProtKB-KW"/>
</dbReference>
<dbReference type="CDD" id="cd00093">
    <property type="entry name" value="HTH_XRE"/>
    <property type="match status" value="1"/>
</dbReference>
<dbReference type="FunFam" id="1.10.260.40:FF:000024">
    <property type="entry name" value="Transcriptional regulator SinR"/>
    <property type="match status" value="1"/>
</dbReference>
<dbReference type="Gene3D" id="1.10.260.40">
    <property type="entry name" value="lambda repressor-like DNA-binding domains"/>
    <property type="match status" value="1"/>
</dbReference>
<dbReference type="InterPro" id="IPR050807">
    <property type="entry name" value="Bact_TransReg_Diox"/>
</dbReference>
<dbReference type="InterPro" id="IPR001387">
    <property type="entry name" value="Cro/C1-type_HTH"/>
</dbReference>
<dbReference type="InterPro" id="IPR010982">
    <property type="entry name" value="Lambda_DNA-bd_dom_sf"/>
</dbReference>
<dbReference type="InterPro" id="IPR010981">
    <property type="entry name" value="SinR/SinI_dimer_dom"/>
</dbReference>
<dbReference type="InterPro" id="IPR036281">
    <property type="entry name" value="SinR/SinI_dimer_dom_sf"/>
</dbReference>
<dbReference type="PANTHER" id="PTHR46797">
    <property type="entry name" value="HTH-TYPE TRANSCRIPTIONAL REGULATOR"/>
    <property type="match status" value="1"/>
</dbReference>
<dbReference type="PANTHER" id="PTHR46797:SF13">
    <property type="entry name" value="HTH-TYPE TRANSCRIPTIONAL REGULATOR SINR"/>
    <property type="match status" value="1"/>
</dbReference>
<dbReference type="Pfam" id="PF01381">
    <property type="entry name" value="HTH_3"/>
    <property type="match status" value="1"/>
</dbReference>
<dbReference type="Pfam" id="PF08671">
    <property type="entry name" value="SinI"/>
    <property type="match status" value="1"/>
</dbReference>
<dbReference type="SMART" id="SM00530">
    <property type="entry name" value="HTH_XRE"/>
    <property type="match status" value="1"/>
</dbReference>
<dbReference type="SUPFAM" id="SSF47413">
    <property type="entry name" value="lambda repressor-like DNA-binding domains"/>
    <property type="match status" value="1"/>
</dbReference>
<dbReference type="SUPFAM" id="SSF47406">
    <property type="entry name" value="SinR repressor dimerisation domain-like"/>
    <property type="match status" value="1"/>
</dbReference>
<dbReference type="PROSITE" id="PS50943">
    <property type="entry name" value="HTH_CROC1"/>
    <property type="match status" value="1"/>
</dbReference>
<dbReference type="PROSITE" id="PS51500">
    <property type="entry name" value="SIN"/>
    <property type="match status" value="1"/>
</dbReference>
<proteinExistence type="evidence at protein level"/>
<evidence type="ECO:0000255" key="1">
    <source>
        <dbReference type="PROSITE-ProRule" id="PRU00257"/>
    </source>
</evidence>
<evidence type="ECO:0000255" key="2">
    <source>
        <dbReference type="PROSITE-ProRule" id="PRU00833"/>
    </source>
</evidence>
<evidence type="ECO:0000269" key="3">
    <source>
    </source>
</evidence>
<evidence type="ECO:0000269" key="4">
    <source>
    </source>
</evidence>
<evidence type="ECO:0000269" key="5">
    <source>
    </source>
</evidence>
<evidence type="ECO:0000269" key="6">
    <source>
    </source>
</evidence>
<evidence type="ECO:0000269" key="7">
    <source>
    </source>
</evidence>
<evidence type="ECO:0000269" key="8">
    <source>
    </source>
</evidence>
<evidence type="ECO:0007829" key="9">
    <source>
        <dbReference type="PDB" id="1B0N"/>
    </source>
</evidence>
<evidence type="ECO:0007829" key="10">
    <source>
        <dbReference type="PDB" id="5TN2"/>
    </source>
</evidence>
<sequence>MIGQRIKQYRKEKGYSLSELAEKAGVAKSYLSSIERNLQTNPSIQFLEKVSAVLDVSVHTLLDEKHETEYDGQLDSEWEKLVRDAMTSGVSKKQFREFLDYQKWRKSQKEE</sequence>
<feature type="chain" id="PRO_0000149738" description="HTH-type transcriptional regulator SinR">
    <location>
        <begin position="1"/>
        <end position="111"/>
    </location>
</feature>
<feature type="domain" description="HTH cro/C1-type" evidence="1">
    <location>
        <begin position="6"/>
        <end position="61"/>
    </location>
</feature>
<feature type="domain" description="Sin" evidence="2">
    <location>
        <begin position="65"/>
        <end position="103"/>
    </location>
</feature>
<feature type="DNA-binding region" description="H-T-H motif" evidence="1">
    <location>
        <begin position="17"/>
        <end position="36"/>
    </location>
</feature>
<feature type="helix" evidence="9">
    <location>
        <begin position="3"/>
        <end position="12"/>
    </location>
</feature>
<feature type="helix" evidence="9">
    <location>
        <begin position="17"/>
        <end position="24"/>
    </location>
</feature>
<feature type="helix" evidence="9">
    <location>
        <begin position="28"/>
        <end position="35"/>
    </location>
</feature>
<feature type="helix" evidence="9">
    <location>
        <begin position="44"/>
        <end position="54"/>
    </location>
</feature>
<feature type="helix" evidence="9">
    <location>
        <begin position="58"/>
        <end position="62"/>
    </location>
</feature>
<feature type="strand" evidence="10">
    <location>
        <begin position="71"/>
        <end position="73"/>
    </location>
</feature>
<feature type="helix" evidence="9">
    <location>
        <begin position="76"/>
        <end position="87"/>
    </location>
</feature>
<feature type="helix" evidence="9">
    <location>
        <begin position="92"/>
        <end position="107"/>
    </location>
</feature>
<organism>
    <name type="scientific">Bacillus subtilis (strain 168)</name>
    <dbReference type="NCBI Taxonomy" id="224308"/>
    <lineage>
        <taxon>Bacteria</taxon>
        <taxon>Bacillati</taxon>
        <taxon>Bacillota</taxon>
        <taxon>Bacilli</taxon>
        <taxon>Bacillales</taxon>
        <taxon>Bacillaceae</taxon>
        <taxon>Bacillus</taxon>
    </lineage>
</organism>
<gene>
    <name type="primary">sinR</name>
    <name type="synonym">flaD</name>
    <name type="synonym">sin</name>
    <name type="ordered locus">BSU24610</name>
</gene>
<keyword id="KW-0002">3D-structure</keyword>
<keyword id="KW-0010">Activator</keyword>
<keyword id="KW-0238">DNA-binding</keyword>
<keyword id="KW-1185">Reference proteome</keyword>
<keyword id="KW-0678">Repressor</keyword>
<keyword id="KW-0749">Sporulation</keyword>
<keyword id="KW-0804">Transcription</keyword>
<keyword id="KW-0805">Transcription regulation</keyword>
<reference key="1">
    <citation type="journal article" date="1986" name="J. Bacteriol.">
        <title>Characterization of a cloned Bacillus subtilis gene that inhibits sporulation in multiple copies.</title>
        <authorList>
            <person name="Gaur N.K."/>
            <person name="Dubnau E."/>
            <person name="Smith I."/>
        </authorList>
    </citation>
    <scope>NUCLEOTIDE SEQUENCE [GENOMIC DNA]</scope>
</reference>
<reference key="2">
    <citation type="journal article" date="1996" name="Microbiology">
        <title>Systematic sequencing of the 283 kb 210 degrees-232 degrees region of the Bacillus subtilis genome containing the skin element and many sporulation genes.</title>
        <authorList>
            <person name="Mizuno M."/>
            <person name="Masuda S."/>
            <person name="Takemaru K."/>
            <person name="Hosono S."/>
            <person name="Sato T."/>
            <person name="Takeuchi M."/>
            <person name="Kobayashi Y."/>
        </authorList>
    </citation>
    <scope>NUCLEOTIDE SEQUENCE [GENOMIC DNA]</scope>
    <source>
        <strain>168 / JH642</strain>
    </source>
</reference>
<reference key="3">
    <citation type="journal article" date="1997" name="Nature">
        <title>The complete genome sequence of the Gram-positive bacterium Bacillus subtilis.</title>
        <authorList>
            <person name="Kunst F."/>
            <person name="Ogasawara N."/>
            <person name="Moszer I."/>
            <person name="Albertini A.M."/>
            <person name="Alloni G."/>
            <person name="Azevedo V."/>
            <person name="Bertero M.G."/>
            <person name="Bessieres P."/>
            <person name="Bolotin A."/>
            <person name="Borchert S."/>
            <person name="Borriss R."/>
            <person name="Boursier L."/>
            <person name="Brans A."/>
            <person name="Braun M."/>
            <person name="Brignell S.C."/>
            <person name="Bron S."/>
            <person name="Brouillet S."/>
            <person name="Bruschi C.V."/>
            <person name="Caldwell B."/>
            <person name="Capuano V."/>
            <person name="Carter N.M."/>
            <person name="Choi S.-K."/>
            <person name="Codani J.-J."/>
            <person name="Connerton I.F."/>
            <person name="Cummings N.J."/>
            <person name="Daniel R.A."/>
            <person name="Denizot F."/>
            <person name="Devine K.M."/>
            <person name="Duesterhoeft A."/>
            <person name="Ehrlich S.D."/>
            <person name="Emmerson P.T."/>
            <person name="Entian K.-D."/>
            <person name="Errington J."/>
            <person name="Fabret C."/>
            <person name="Ferrari E."/>
            <person name="Foulger D."/>
            <person name="Fritz C."/>
            <person name="Fujita M."/>
            <person name="Fujita Y."/>
            <person name="Fuma S."/>
            <person name="Galizzi A."/>
            <person name="Galleron N."/>
            <person name="Ghim S.-Y."/>
            <person name="Glaser P."/>
            <person name="Goffeau A."/>
            <person name="Golightly E.J."/>
            <person name="Grandi G."/>
            <person name="Guiseppi G."/>
            <person name="Guy B.J."/>
            <person name="Haga K."/>
            <person name="Haiech J."/>
            <person name="Harwood C.R."/>
            <person name="Henaut A."/>
            <person name="Hilbert H."/>
            <person name="Holsappel S."/>
            <person name="Hosono S."/>
            <person name="Hullo M.-F."/>
            <person name="Itaya M."/>
            <person name="Jones L.-M."/>
            <person name="Joris B."/>
            <person name="Karamata D."/>
            <person name="Kasahara Y."/>
            <person name="Klaerr-Blanchard M."/>
            <person name="Klein C."/>
            <person name="Kobayashi Y."/>
            <person name="Koetter P."/>
            <person name="Koningstein G."/>
            <person name="Krogh S."/>
            <person name="Kumano M."/>
            <person name="Kurita K."/>
            <person name="Lapidus A."/>
            <person name="Lardinois S."/>
            <person name="Lauber J."/>
            <person name="Lazarevic V."/>
            <person name="Lee S.-M."/>
            <person name="Levine A."/>
            <person name="Liu H."/>
            <person name="Masuda S."/>
            <person name="Mauel C."/>
            <person name="Medigue C."/>
            <person name="Medina N."/>
            <person name="Mellado R.P."/>
            <person name="Mizuno M."/>
            <person name="Moestl D."/>
            <person name="Nakai S."/>
            <person name="Noback M."/>
            <person name="Noone D."/>
            <person name="O'Reilly M."/>
            <person name="Ogawa K."/>
            <person name="Ogiwara A."/>
            <person name="Oudega B."/>
            <person name="Park S.-H."/>
            <person name="Parro V."/>
            <person name="Pohl T.M."/>
            <person name="Portetelle D."/>
            <person name="Porwollik S."/>
            <person name="Prescott A.M."/>
            <person name="Presecan E."/>
            <person name="Pujic P."/>
            <person name="Purnelle B."/>
            <person name="Rapoport G."/>
            <person name="Rey M."/>
            <person name="Reynolds S."/>
            <person name="Rieger M."/>
            <person name="Rivolta C."/>
            <person name="Rocha E."/>
            <person name="Roche B."/>
            <person name="Rose M."/>
            <person name="Sadaie Y."/>
            <person name="Sato T."/>
            <person name="Scanlan E."/>
            <person name="Schleich S."/>
            <person name="Schroeter R."/>
            <person name="Scoffone F."/>
            <person name="Sekiguchi J."/>
            <person name="Sekowska A."/>
            <person name="Seror S.J."/>
            <person name="Serror P."/>
            <person name="Shin B.-S."/>
            <person name="Soldo B."/>
            <person name="Sorokin A."/>
            <person name="Tacconi E."/>
            <person name="Takagi T."/>
            <person name="Takahashi H."/>
            <person name="Takemaru K."/>
            <person name="Takeuchi M."/>
            <person name="Tamakoshi A."/>
            <person name="Tanaka T."/>
            <person name="Terpstra P."/>
            <person name="Tognoni A."/>
            <person name="Tosato V."/>
            <person name="Uchiyama S."/>
            <person name="Vandenbol M."/>
            <person name="Vannier F."/>
            <person name="Vassarotti A."/>
            <person name="Viari A."/>
            <person name="Wambutt R."/>
            <person name="Wedler E."/>
            <person name="Wedler H."/>
            <person name="Weitzenegger T."/>
            <person name="Winters P."/>
            <person name="Wipat A."/>
            <person name="Yamamoto H."/>
            <person name="Yamane K."/>
            <person name="Yasumoto K."/>
            <person name="Yata K."/>
            <person name="Yoshida K."/>
            <person name="Yoshikawa H.-F."/>
            <person name="Zumstein E."/>
            <person name="Yoshikawa H."/>
            <person name="Danchin A."/>
        </authorList>
    </citation>
    <scope>NUCLEOTIDE SEQUENCE [LARGE SCALE GENOMIC DNA]</scope>
    <source>
        <strain>168</strain>
    </source>
</reference>
<reference key="4">
    <citation type="journal article" date="1991" name="J. Bacteriol.">
        <title>The Bacillus subtilis sin gene, a regulator of alternate developmental processes, codes for a DNA-binding protein.</title>
        <authorList>
            <person name="Gaur N.K."/>
            <person name="Oppenheim J."/>
            <person name="Smith I."/>
        </authorList>
    </citation>
    <scope>FUNCTION</scope>
</reference>
<reference key="5">
    <citation type="journal article" date="1995" name="J. Bacteriol.">
        <title>The Bacillus subtilis SinR protein is a repressor of the key sporulation gene spo0A.</title>
        <authorList>
            <person name="Mandic-Mulec I."/>
            <person name="Doukhan L."/>
            <person name="Smith I."/>
        </authorList>
    </citation>
    <scope>FUNCTION</scope>
</reference>
<reference key="6">
    <citation type="journal article" date="2004" name="Biotechnol. Lett.">
        <title>Bacillus subtilis transcriptional regulators interaction.</title>
        <authorList>
            <person name="Sanchez A."/>
            <person name="Olmos J."/>
        </authorList>
    </citation>
    <scope>INTERACTION WITH HPR</scope>
</reference>
<reference key="7">
    <citation type="journal article" date="2005" name="Mol. Microbiol.">
        <title>A master regulator for biofilm formation by Bacillus subtilis.</title>
        <authorList>
            <person name="Kearns D.B."/>
            <person name="Chu F."/>
            <person name="Branda S.S."/>
            <person name="Kolter R."/>
            <person name="Losick R."/>
        </authorList>
    </citation>
    <scope>FUNCTION</scope>
    <source>
        <strain>168</strain>
        <strain>3610</strain>
    </source>
</reference>
<reference key="8">
    <citation type="journal article" date="2006" name="J. Bacteriol.">
        <title>ScoC and SinR negatively regulate epr by corepression in Bacillus subtilis.</title>
        <authorList>
            <person name="Kodgire P."/>
            <person name="Dixit M."/>
            <person name="Rao K.K."/>
        </authorList>
    </citation>
    <scope>FUNCTION</scope>
    <scope>INTERACTION WITH HPR</scope>
    <source>
        <strain>168</strain>
    </source>
</reference>
<reference key="9">
    <citation type="journal article" date="2009" name="J. Bacteriol.">
        <title>A widely conserved gene cluster required for lactate utilization in Bacillus subtilis and its involvement in biofilm formation.</title>
        <authorList>
            <person name="Chai Y."/>
            <person name="Kolter R."/>
            <person name="Losick R."/>
        </authorList>
    </citation>
    <scope>REPRESSOR OF LUTABC OPERON</scope>
    <source>
        <strain>3610</strain>
    </source>
</reference>
<reference key="10">
    <citation type="journal article" date="1998" name="J. Mol. Biol.">
        <title>An evolutionary link between sporulation and prophage induction in the structure of a repressor:anti-repressor complex.</title>
        <authorList>
            <person name="Lewis R.J."/>
            <person name="Brannigan J.A."/>
            <person name="Offen W.A."/>
            <person name="Smith I."/>
            <person name="Wilkinson A.J."/>
        </authorList>
    </citation>
    <scope>X-RAY CRYSTALLOGRAPHY (1.9 ANGSTROMS) IN COMPLEX WITH SINI</scope>
    <scope>SUBUNIT</scope>
</reference>
<name>SINR_BACSU</name>